<reference key="1">
    <citation type="journal article" date="1993" name="Curr. Genet.">
        <title>Sequence and chromosomal localization of two PET genes required for cytochrome c oxidase assembly in Saccharomyces cerevisiae.</title>
        <authorList>
            <person name="McEwen J.E."/>
            <person name="Hong K.H."/>
            <person name="Park S."/>
            <person name="Preciado G.T."/>
        </authorList>
    </citation>
    <scope>NUCLEOTIDE SEQUENCE [GENOMIC DNA]</scope>
</reference>
<reference key="2">
    <citation type="journal article" date="1995" name="Yeast">
        <title>Analysis of a 42.5 kb DNA sequence of chromosome X reveals three tRNA genes and 14 new open reading frames including a gene most probably belonging to the family of ubiquitin-protein ligases.</title>
        <authorList>
            <person name="Huang M.-E."/>
            <person name="Chuat J.-C."/>
            <person name="Galibert F."/>
        </authorList>
    </citation>
    <scope>NUCLEOTIDE SEQUENCE [GENOMIC DNA]</scope>
    <source>
        <strain>ATCC 204508 / S288c</strain>
    </source>
</reference>
<reference key="3">
    <citation type="journal article" date="1996" name="EMBO J.">
        <title>Complete nucleotide sequence of Saccharomyces cerevisiae chromosome X.</title>
        <authorList>
            <person name="Galibert F."/>
            <person name="Alexandraki D."/>
            <person name="Baur A."/>
            <person name="Boles E."/>
            <person name="Chalwatzis N."/>
            <person name="Chuat J.-C."/>
            <person name="Coster F."/>
            <person name="Cziepluch C."/>
            <person name="de Haan M."/>
            <person name="Domdey H."/>
            <person name="Durand P."/>
            <person name="Entian K.-D."/>
            <person name="Gatius M."/>
            <person name="Goffeau A."/>
            <person name="Grivell L.A."/>
            <person name="Hennemann A."/>
            <person name="Herbert C.J."/>
            <person name="Heumann K."/>
            <person name="Hilger F."/>
            <person name="Hollenberg C.P."/>
            <person name="Huang M.-E."/>
            <person name="Jacq C."/>
            <person name="Jauniaux J.-C."/>
            <person name="Katsoulou C."/>
            <person name="Kirchrath L."/>
            <person name="Kleine K."/>
            <person name="Kordes E."/>
            <person name="Koetter P."/>
            <person name="Liebl S."/>
            <person name="Louis E.J."/>
            <person name="Manus V."/>
            <person name="Mewes H.-W."/>
            <person name="Miosga T."/>
            <person name="Obermaier B."/>
            <person name="Perea J."/>
            <person name="Pohl T.M."/>
            <person name="Portetelle D."/>
            <person name="Pujol A."/>
            <person name="Purnelle B."/>
            <person name="Ramezani Rad M."/>
            <person name="Rasmussen S.W."/>
            <person name="Rose M."/>
            <person name="Rossau R."/>
            <person name="Schaaff-Gerstenschlaeger I."/>
            <person name="Smits P.H.M."/>
            <person name="Scarcez T."/>
            <person name="Soriano N."/>
            <person name="To Van D."/>
            <person name="Tzermia M."/>
            <person name="Van Broekhoven A."/>
            <person name="Vandenbol M."/>
            <person name="Wedler H."/>
            <person name="von Wettstein D."/>
            <person name="Wambutt R."/>
            <person name="Zagulski M."/>
            <person name="Zollner A."/>
            <person name="Karpfinger-Hartl L."/>
        </authorList>
    </citation>
    <scope>NUCLEOTIDE SEQUENCE [LARGE SCALE GENOMIC DNA]</scope>
    <source>
        <strain>ATCC 204508 / S288c</strain>
    </source>
</reference>
<reference key="4">
    <citation type="journal article" date="2014" name="G3 (Bethesda)">
        <title>The reference genome sequence of Saccharomyces cerevisiae: Then and now.</title>
        <authorList>
            <person name="Engel S.R."/>
            <person name="Dietrich F.S."/>
            <person name="Fisk D.G."/>
            <person name="Binkley G."/>
            <person name="Balakrishnan R."/>
            <person name="Costanzo M.C."/>
            <person name="Dwight S.S."/>
            <person name="Hitz B.C."/>
            <person name="Karra K."/>
            <person name="Nash R.S."/>
            <person name="Weng S."/>
            <person name="Wong E.D."/>
            <person name="Lloyd P."/>
            <person name="Skrzypek M.S."/>
            <person name="Miyasato S.R."/>
            <person name="Simison M."/>
            <person name="Cherry J.M."/>
        </authorList>
    </citation>
    <scope>GENOME REANNOTATION</scope>
    <source>
        <strain>ATCC 204508 / S288c</strain>
    </source>
</reference>
<reference key="5">
    <citation type="journal article" date="2007" name="Genome Res.">
        <title>Approaching a complete repository of sequence-verified protein-encoding clones for Saccharomyces cerevisiae.</title>
        <authorList>
            <person name="Hu Y."/>
            <person name="Rolfs A."/>
            <person name="Bhullar B."/>
            <person name="Murthy T.V.S."/>
            <person name="Zhu C."/>
            <person name="Berger M.F."/>
            <person name="Camargo A.A."/>
            <person name="Kelley F."/>
            <person name="McCarron S."/>
            <person name="Jepson D."/>
            <person name="Richardson A."/>
            <person name="Raphael J."/>
            <person name="Moreira D."/>
            <person name="Taycher E."/>
            <person name="Zuo D."/>
            <person name="Mohr S."/>
            <person name="Kane M.F."/>
            <person name="Williamson J."/>
            <person name="Simpson A.J.G."/>
            <person name="Bulyk M.L."/>
            <person name="Harlow E."/>
            <person name="Marsischky G."/>
            <person name="Kolodner R.D."/>
            <person name="LaBaer J."/>
        </authorList>
    </citation>
    <scope>NUCLEOTIDE SEQUENCE [GENOMIC DNA]</scope>
    <source>
        <strain>ATCC 204508 / S288c</strain>
    </source>
</reference>
<reference key="6">
    <citation type="journal article" date="1994" name="EMBO J.">
        <title>RAD26, the functional S. cerevisiae homolog of the Cockayne syndrome B gene ERCC6.</title>
        <authorList>
            <person name="van Gool A.J."/>
            <person name="Verhage R."/>
            <person name="Swagemakers S.M.A."/>
            <person name="van de Putte P."/>
            <person name="Brouwer J."/>
            <person name="Troelstra C."/>
            <person name="Bootsma D."/>
            <person name="Hoeijmakers J.H.J."/>
        </authorList>
    </citation>
    <scope>NUCLEOTIDE SEQUENCE [GENOMIC DNA] OF 74-108</scope>
</reference>
<reference key="7">
    <citation type="journal article" date="2002" name="Genes Dev.">
        <title>Subcellular localization of the yeast proteome.</title>
        <authorList>
            <person name="Kumar A."/>
            <person name="Agarwal S."/>
            <person name="Heyman J.A."/>
            <person name="Matson S."/>
            <person name="Heidtman M."/>
            <person name="Piccirillo S."/>
            <person name="Umansky L."/>
            <person name="Drawid A."/>
            <person name="Jansen R."/>
            <person name="Liu Y."/>
            <person name="Cheung K.-H."/>
            <person name="Miller P."/>
            <person name="Gerstein M."/>
            <person name="Roeder G.S."/>
            <person name="Snyder M."/>
        </authorList>
    </citation>
    <scope>SUBCELLULAR LOCATION</scope>
</reference>
<reference key="8">
    <citation type="journal article" date="2003" name="Proc. Natl. Acad. Sci. U.S.A.">
        <title>The proteome of Saccharomyces cerevisiae mitochondria.</title>
        <authorList>
            <person name="Sickmann A."/>
            <person name="Reinders J."/>
            <person name="Wagner Y."/>
            <person name="Joppich C."/>
            <person name="Zahedi R.P."/>
            <person name="Meyer H.E."/>
            <person name="Schoenfisch B."/>
            <person name="Perschil I."/>
            <person name="Chacinska A."/>
            <person name="Guiard B."/>
            <person name="Rehling P."/>
            <person name="Pfanner N."/>
            <person name="Meisinger C."/>
        </authorList>
    </citation>
    <scope>SUBCELLULAR LOCATION [LARGE SCALE ANALYSIS]</scope>
    <source>
        <strain>ATCC 76625 / YPH499</strain>
    </source>
</reference>
<reference key="9">
    <citation type="journal article" date="2012" name="Mol. Cell. Proteomics">
        <title>Intermembrane space proteome of yeast mitochondria.</title>
        <authorList>
            <person name="Voegtle F.N."/>
            <person name="Burkhart J.M."/>
            <person name="Rao S."/>
            <person name="Gerbeth C."/>
            <person name="Hinrichs J."/>
            <person name="Martinou J.C."/>
            <person name="Chacinska A."/>
            <person name="Sickmann A."/>
            <person name="Zahedi R.P."/>
            <person name="Meisinger C."/>
        </authorList>
    </citation>
    <scope>IDENTIFICATION BY MASS SPECTROMETRY</scope>
    <scope>SUBCELLULAR LOCATION [LARGE SCALE ANALYSIS]</scope>
</reference>
<organism>
    <name type="scientific">Saccharomyces cerevisiae (strain ATCC 204508 / S288c)</name>
    <name type="common">Baker's yeast</name>
    <dbReference type="NCBI Taxonomy" id="559292"/>
    <lineage>
        <taxon>Eukaryota</taxon>
        <taxon>Fungi</taxon>
        <taxon>Dikarya</taxon>
        <taxon>Ascomycota</taxon>
        <taxon>Saccharomycotina</taxon>
        <taxon>Saccharomycetes</taxon>
        <taxon>Saccharomycetales</taxon>
        <taxon>Saccharomycetaceae</taxon>
        <taxon>Saccharomyces</taxon>
    </lineage>
</organism>
<dbReference type="EMBL" id="L06067">
    <property type="protein sequence ID" value="AAA34855.1"/>
    <property type="molecule type" value="Genomic_DNA"/>
</dbReference>
<dbReference type="EMBL" id="X70013">
    <property type="protein sequence ID" value="CAA49613.1"/>
    <property type="molecule type" value="Genomic_DNA"/>
</dbReference>
<dbReference type="EMBL" id="L36344">
    <property type="protein sequence ID" value="AAA88737.1"/>
    <property type="molecule type" value="Genomic_DNA"/>
</dbReference>
<dbReference type="EMBL" id="Z49534">
    <property type="protein sequence ID" value="CAA89561.1"/>
    <property type="molecule type" value="Genomic_DNA"/>
</dbReference>
<dbReference type="EMBL" id="AY558310">
    <property type="protein sequence ID" value="AAS56636.1"/>
    <property type="molecule type" value="Genomic_DNA"/>
</dbReference>
<dbReference type="EMBL" id="X81635">
    <property type="protein sequence ID" value="CAA57289.1"/>
    <property type="molecule type" value="Genomic_DNA"/>
</dbReference>
<dbReference type="EMBL" id="BK006943">
    <property type="protein sequence ID" value="DAA08823.1"/>
    <property type="molecule type" value="Genomic_DNA"/>
</dbReference>
<dbReference type="PIR" id="S28924">
    <property type="entry name" value="S28924"/>
</dbReference>
<dbReference type="RefSeq" id="NP_012568.1">
    <property type="nucleotide sequence ID" value="NM_001181692.1"/>
</dbReference>
<dbReference type="SMR" id="Q02772"/>
<dbReference type="BioGRID" id="33787">
    <property type="interactions" value="90"/>
</dbReference>
<dbReference type="DIP" id="DIP-1619N"/>
<dbReference type="FunCoup" id="Q02772">
    <property type="interactions" value="341"/>
</dbReference>
<dbReference type="IntAct" id="Q02772">
    <property type="interactions" value="4"/>
</dbReference>
<dbReference type="MINT" id="Q02772"/>
<dbReference type="STRING" id="4932.YJR034W"/>
<dbReference type="PaxDb" id="4932-YJR034W"/>
<dbReference type="PeptideAtlas" id="Q02772"/>
<dbReference type="EnsemblFungi" id="YJR034W_mRNA">
    <property type="protein sequence ID" value="YJR034W"/>
    <property type="gene ID" value="YJR034W"/>
</dbReference>
<dbReference type="GeneID" id="853491"/>
<dbReference type="KEGG" id="sce:YJR034W"/>
<dbReference type="AGR" id="SGD:S000003795"/>
<dbReference type="SGD" id="S000003795">
    <property type="gene designation" value="PET191"/>
</dbReference>
<dbReference type="VEuPathDB" id="FungiDB:YJR034W"/>
<dbReference type="eggNOG" id="KOG4114">
    <property type="taxonomic scope" value="Eukaryota"/>
</dbReference>
<dbReference type="HOGENOM" id="CLU_138069_1_0_1"/>
<dbReference type="InParanoid" id="Q02772"/>
<dbReference type="OMA" id="FLECKRG"/>
<dbReference type="OrthoDB" id="282149at2759"/>
<dbReference type="BioCyc" id="YEAST:G3O-31671-MONOMER"/>
<dbReference type="BioGRID-ORCS" id="853491">
    <property type="hits" value="0 hits in 10 CRISPR screens"/>
</dbReference>
<dbReference type="PRO" id="PR:Q02772"/>
<dbReference type="Proteomes" id="UP000002311">
    <property type="component" value="Chromosome X"/>
</dbReference>
<dbReference type="RNAct" id="Q02772">
    <property type="molecule type" value="protein"/>
</dbReference>
<dbReference type="GO" id="GO:0005743">
    <property type="term" value="C:mitochondrial inner membrane"/>
    <property type="evidence" value="ECO:0000314"/>
    <property type="project" value="SGD"/>
</dbReference>
<dbReference type="GO" id="GO:0005758">
    <property type="term" value="C:mitochondrial intermembrane space"/>
    <property type="evidence" value="ECO:0000314"/>
    <property type="project" value="SGD"/>
</dbReference>
<dbReference type="GO" id="GO:0005739">
    <property type="term" value="C:mitochondrion"/>
    <property type="evidence" value="ECO:0007005"/>
    <property type="project" value="SGD"/>
</dbReference>
<dbReference type="GO" id="GO:0033617">
    <property type="term" value="P:mitochondrial cytochrome c oxidase assembly"/>
    <property type="evidence" value="ECO:0000315"/>
    <property type="project" value="SGD"/>
</dbReference>
<dbReference type="InterPro" id="IPR018793">
    <property type="entry name" value="Cyt_c_oxidase_assmbl_Pet191"/>
</dbReference>
<dbReference type="PANTHER" id="PTHR28627">
    <property type="entry name" value="CYTOCHROME C OXIDASE ASSEMBLY FACTOR 5"/>
    <property type="match status" value="1"/>
</dbReference>
<dbReference type="PANTHER" id="PTHR28627:SF1">
    <property type="entry name" value="CYTOCHROME C OXIDASE ASSEMBLY FACTOR 5"/>
    <property type="match status" value="1"/>
</dbReference>
<dbReference type="Pfam" id="PF10203">
    <property type="entry name" value="Pet191_N"/>
    <property type="match status" value="1"/>
</dbReference>
<dbReference type="PROSITE" id="PS51808">
    <property type="entry name" value="CHCH"/>
    <property type="match status" value="1"/>
</dbReference>
<sequence>MVASCKDQKKAVAICLQRSPCVMIERHNPQECLDNPELNKDLPELCIAQMKAFLDCKRGIVDMTKRFTGNAPLSTGKYDQQYENLCKGKFDPREEMEKLKLLNSQQKD</sequence>
<protein>
    <recommendedName>
        <fullName>Mitochondrial protein PET191</fullName>
    </recommendedName>
</protein>
<name>PT191_YEAST</name>
<keyword id="KW-1015">Disulfide bond</keyword>
<keyword id="KW-0496">Mitochondrion</keyword>
<keyword id="KW-1185">Reference proteome</keyword>
<gene>
    <name type="primary">PET191</name>
    <name type="ordered locus">YJR034W</name>
    <name type="ORF">J1604</name>
</gene>
<accession>Q02772</accession>
<accession>D6VWK7</accession>
<proteinExistence type="evidence at protein level"/>
<comment type="function">
    <text>Involved in the assembly of cytochrome c oxidase.</text>
</comment>
<comment type="subcellular location">
    <subcellularLocation>
        <location evidence="3 4 5">Mitochondrion intermembrane space</location>
    </subcellularLocation>
    <text>Imported into the mitochondria via the mitochondrial MIA40-ERV1 machinery.</text>
</comment>
<comment type="domain">
    <text evidence="1">The twin Cx9C motifs are involved in the recognition by the mitochondrial MIA40-ERV1 disulfide relay system and the subsequent transfer of disulfide bonds by dithiol/disulfide exchange reactions to the newly imported protein.</text>
</comment>
<comment type="similarity">
    <text evidence="6">Belongs to the PET191 family.</text>
</comment>
<evidence type="ECO:0000250" key="1"/>
<evidence type="ECO:0000255" key="2">
    <source>
        <dbReference type="PROSITE-ProRule" id="PRU01150"/>
    </source>
</evidence>
<evidence type="ECO:0000269" key="3">
    <source>
    </source>
</evidence>
<evidence type="ECO:0000269" key="4">
    <source>
    </source>
</evidence>
<evidence type="ECO:0000269" key="5">
    <source>
    </source>
</evidence>
<evidence type="ECO:0000305" key="6"/>
<feature type="chain" id="PRO_0000022178" description="Mitochondrial protein PET191">
    <location>
        <begin position="1"/>
        <end position="108"/>
    </location>
</feature>
<feature type="domain" description="CHCH" evidence="2">
    <location>
        <begin position="18"/>
        <end position="64"/>
    </location>
</feature>
<feature type="short sequence motif" description="Cx10C motif" evidence="2">
    <location>
        <begin position="21"/>
        <end position="32"/>
    </location>
</feature>
<feature type="short sequence motif" description="Cx9C motif" evidence="2">
    <location>
        <begin position="46"/>
        <end position="56"/>
    </location>
</feature>
<feature type="disulfide bond" evidence="2">
    <location>
        <begin position="21"/>
        <end position="56"/>
    </location>
</feature>
<feature type="disulfide bond" evidence="2">
    <location>
        <begin position="32"/>
        <end position="46"/>
    </location>
</feature>